<gene>
    <name type="primary">MNN24</name>
    <name type="synonym">MNN2</name>
    <name type="synonym">MNN22</name>
    <name type="ordered locus">CAALFM_C201300CA</name>
    <name type="ORF">CaO19.1995</name>
    <name type="ORF">CaO19.9547</name>
</gene>
<protein>
    <recommendedName>
        <fullName>Alpha-1,2-mannosyltransferase MNN24</fullName>
        <ecNumber>2.4.1.-</ecNumber>
    </recommendedName>
</protein>
<sequence>MFSIPVSSKTVRLILVSLLLITLINILAAFQRSTLSSWFPSSRHIINKFTDLRLALSSQESVLRDEEGEIYSLVGYHHDFDSNLVVVQKQYLLEKTPNEDTTEHFWNFLQSNFETKSEYDLNLIDGYNYKKLIKHLNEQNELQLSHSFVEQYKMENQFIQSFQNFFVQLIDTIEDCKPDLDPINNDNHYPNGDKIVKYYELRNKIPSENMKQFNIERLIHRNGRIPIYGGHLREQYKDELIRNKEFLSMYLTLSDSEISALKKSHTKFLETMMENWPENLFKFNKFNNFMKGDGIVYLGGGKYNQLVLLSIKILRENGSRLPVEVIIPYKNDYDIQFCDRVLPTLNGKCKLMTDYLPQTFVDKISGFQLKNIALLISSFERILYLDADNIPIRNPDVLFTNAPFTTKHLVVWPDLWRRSTSPHYYTIAGIEVDPNFKVRNSYVDGDERGKYTDSMYYSYHDCKGSIPEASSETGQLLINKKIHFQTLILAMYYNYYGPDYYYPLFSQGAAGEGDKETFIAAAHKLDLPYYQVGEFNREFGPINDNTRKHEFYGMGQYDPIIDYYMSTITTTQKDTKKKINYNSPLPEKYAANDEDDTCSNYDFHLFQSSSLFFLHANWPKYYIEKLFLYSYDEDRGPVTNDGDKRRLYGNELKKELGGYDFELNIMKNLHWCFCEEPLIDLIGIPVVGSKTRTDVCIAIKNHIEFLEIS</sequence>
<name>MNN24_CANAL</name>
<reference key="1">
    <citation type="journal article" date="2004" name="Proc. Natl. Acad. Sci. U.S.A.">
        <title>The diploid genome sequence of Candida albicans.</title>
        <authorList>
            <person name="Jones T."/>
            <person name="Federspiel N.A."/>
            <person name="Chibana H."/>
            <person name="Dungan J."/>
            <person name="Kalman S."/>
            <person name="Magee B.B."/>
            <person name="Newport G."/>
            <person name="Thorstenson Y.R."/>
            <person name="Agabian N."/>
            <person name="Magee P.T."/>
            <person name="Davis R.W."/>
            <person name="Scherer S."/>
        </authorList>
    </citation>
    <scope>NUCLEOTIDE SEQUENCE [LARGE SCALE GENOMIC DNA]</scope>
    <source>
        <strain>SC5314 / ATCC MYA-2876</strain>
    </source>
</reference>
<reference key="2">
    <citation type="journal article" date="2007" name="Genome Biol.">
        <title>Assembly of the Candida albicans genome into sixteen supercontigs aligned on the eight chromosomes.</title>
        <authorList>
            <person name="van het Hoog M."/>
            <person name="Rast T.J."/>
            <person name="Martchenko M."/>
            <person name="Grindle S."/>
            <person name="Dignard D."/>
            <person name="Hogues H."/>
            <person name="Cuomo C."/>
            <person name="Berriman M."/>
            <person name="Scherer S."/>
            <person name="Magee B.B."/>
            <person name="Whiteway M."/>
            <person name="Chibana H."/>
            <person name="Nantel A."/>
            <person name="Magee P.T."/>
        </authorList>
    </citation>
    <scope>GENOME REANNOTATION</scope>
    <source>
        <strain>SC5314 / ATCC MYA-2876</strain>
    </source>
</reference>
<reference key="3">
    <citation type="journal article" date="2013" name="Genome Biol.">
        <title>Assembly of a phased diploid Candida albicans genome facilitates allele-specific measurements and provides a simple model for repeat and indel structure.</title>
        <authorList>
            <person name="Muzzey D."/>
            <person name="Schwartz K."/>
            <person name="Weissman J.S."/>
            <person name="Sherlock G."/>
        </authorList>
    </citation>
    <scope>NUCLEOTIDE SEQUENCE [LARGE SCALE GENOMIC DNA]</scope>
    <scope>GENOME REANNOTATION</scope>
    <source>
        <strain>SC5314 / ATCC MYA-2876</strain>
    </source>
</reference>
<reference key="4">
    <citation type="journal article" date="2013" name="PLoS Pathog.">
        <title>The Mnn2 mannosyltransferase family modulates mannoprotein fibril length, immune recognition and virulence of Candida albicans.</title>
        <authorList>
            <person name="Hall R.A."/>
            <person name="Bates S."/>
            <person name="Lenardon M.D."/>
            <person name="Maccallum D.M."/>
            <person name="Wagener J."/>
            <person name="Lowman D.W."/>
            <person name="Kruppa M.D."/>
            <person name="Williams D.L."/>
            <person name="Odds F.C."/>
            <person name="Brown A.J."/>
            <person name="Gow N.A."/>
        </authorList>
    </citation>
    <scope>FUNCTION</scope>
</reference>
<dbReference type="EC" id="2.4.1.-"/>
<dbReference type="EMBL" id="CP017624">
    <property type="protein sequence ID" value="AOW27176.1"/>
    <property type="molecule type" value="Genomic_DNA"/>
</dbReference>
<dbReference type="RefSeq" id="XP_719445.1">
    <property type="nucleotide sequence ID" value="XM_714352.2"/>
</dbReference>
<dbReference type="STRING" id="237561.Q5AD72"/>
<dbReference type="GlyCosmos" id="Q5AD72">
    <property type="glycosylation" value="1 site, No reported glycans"/>
</dbReference>
<dbReference type="EnsemblFungi" id="C2_01300C_A-T">
    <property type="protein sequence ID" value="C2_01300C_A-T-p1"/>
    <property type="gene ID" value="C2_01300C_A"/>
</dbReference>
<dbReference type="GeneID" id="3638789"/>
<dbReference type="KEGG" id="cal:CAALFM_C201300CA"/>
<dbReference type="CGD" id="CAL0000192056">
    <property type="gene designation" value="MNN24"/>
</dbReference>
<dbReference type="VEuPathDB" id="FungiDB:C2_01300C_A"/>
<dbReference type="eggNOG" id="ENOG502SJ0W">
    <property type="taxonomic scope" value="Eukaryota"/>
</dbReference>
<dbReference type="HOGENOM" id="CLU_013298_1_0_1"/>
<dbReference type="InParanoid" id="Q5AD72"/>
<dbReference type="OrthoDB" id="430354at2759"/>
<dbReference type="UniPathway" id="UPA00378"/>
<dbReference type="PHI-base" id="PHI:2885"/>
<dbReference type="PRO" id="PR:Q5AD72"/>
<dbReference type="Proteomes" id="UP000000559">
    <property type="component" value="Chromosome 2"/>
</dbReference>
<dbReference type="GO" id="GO:0005794">
    <property type="term" value="C:Golgi apparatus"/>
    <property type="evidence" value="ECO:0000318"/>
    <property type="project" value="GO_Central"/>
</dbReference>
<dbReference type="GO" id="GO:0000139">
    <property type="term" value="C:Golgi membrane"/>
    <property type="evidence" value="ECO:0007669"/>
    <property type="project" value="UniProtKB-SubCell"/>
</dbReference>
<dbReference type="GO" id="GO:0000026">
    <property type="term" value="F:alpha-1,2-mannosyltransferase activity"/>
    <property type="evidence" value="ECO:0000318"/>
    <property type="project" value="GO_Central"/>
</dbReference>
<dbReference type="GO" id="GO:0046354">
    <property type="term" value="P:mannan biosynthetic process"/>
    <property type="evidence" value="ECO:0000315"/>
    <property type="project" value="CGD"/>
</dbReference>
<dbReference type="GO" id="GO:0035268">
    <property type="term" value="P:protein mannosylation"/>
    <property type="evidence" value="ECO:0000315"/>
    <property type="project" value="CGD"/>
</dbReference>
<dbReference type="InterPro" id="IPR022751">
    <property type="entry name" value="Alpha_mannosyltransferase"/>
</dbReference>
<dbReference type="InterPro" id="IPR029044">
    <property type="entry name" value="Nucleotide-diphossugar_trans"/>
</dbReference>
<dbReference type="PANTHER" id="PTHR31646">
    <property type="entry name" value="ALPHA-1,2-MANNOSYLTRANSFERASE MNN2"/>
    <property type="match status" value="1"/>
</dbReference>
<dbReference type="PANTHER" id="PTHR31646:SF1">
    <property type="entry name" value="ALPHA-1,2-MANNOSYLTRANSFERASE MNN2"/>
    <property type="match status" value="1"/>
</dbReference>
<dbReference type="Pfam" id="PF11051">
    <property type="entry name" value="Mannosyl_trans3"/>
    <property type="match status" value="1"/>
</dbReference>
<dbReference type="SUPFAM" id="SSF53448">
    <property type="entry name" value="Nucleotide-diphospho-sugar transferases"/>
    <property type="match status" value="1"/>
</dbReference>
<feature type="chain" id="PRO_0000428638" description="Alpha-1,2-mannosyltransferase MNN24">
    <location>
        <begin position="1"/>
        <end position="709"/>
    </location>
</feature>
<feature type="topological domain" description="Cytoplasmic" evidence="2">
    <location>
        <begin position="1"/>
        <end position="9"/>
    </location>
</feature>
<feature type="transmembrane region" description="Helical" evidence="2">
    <location>
        <begin position="10"/>
        <end position="30"/>
    </location>
</feature>
<feature type="topological domain" description="Extracellular" evidence="2">
    <location>
        <begin position="31"/>
        <end position="709"/>
    </location>
</feature>
<feature type="glycosylation site" description="N-linked (GlcNAc...) asparagine" evidence="2">
    <location>
        <position position="317"/>
    </location>
</feature>
<proteinExistence type="inferred from homology"/>
<comment type="function">
    <text evidence="3">Alpha-1,2-mannosyltransferase required for cell wall integrity. Responsible for addition of the first alpha-1,2-linked mannose to form the branches on the mannan backbone of oligosaccharides. Addition of alpha-1,2-mannose is required for stabilization of the alpha-1,6-mannose backbone and hence regulates mannan fibril length; and is important for both immune recognition and virulence.</text>
</comment>
<comment type="pathway">
    <text>Protein modification; protein glycosylation.</text>
</comment>
<comment type="subcellular location">
    <subcellularLocation>
        <location evidence="1">Golgi apparatus membrane</location>
        <topology evidence="1">Single-pass type II membrane protein</topology>
    </subcellularLocation>
</comment>
<comment type="similarity">
    <text evidence="4">Belongs to the MNN1/MNT family.</text>
</comment>
<accession>Q5AD72</accession>
<accession>A0A1D8PGB3</accession>
<accession>Q5ADK0</accession>
<evidence type="ECO:0000250" key="1"/>
<evidence type="ECO:0000255" key="2"/>
<evidence type="ECO:0000269" key="3">
    <source>
    </source>
</evidence>
<evidence type="ECO:0000305" key="4"/>
<organism>
    <name type="scientific">Candida albicans (strain SC5314 / ATCC MYA-2876)</name>
    <name type="common">Yeast</name>
    <dbReference type="NCBI Taxonomy" id="237561"/>
    <lineage>
        <taxon>Eukaryota</taxon>
        <taxon>Fungi</taxon>
        <taxon>Dikarya</taxon>
        <taxon>Ascomycota</taxon>
        <taxon>Saccharomycotina</taxon>
        <taxon>Pichiomycetes</taxon>
        <taxon>Debaryomycetaceae</taxon>
        <taxon>Candida/Lodderomyces clade</taxon>
        <taxon>Candida</taxon>
    </lineage>
</organism>
<keyword id="KW-0325">Glycoprotein</keyword>
<keyword id="KW-0333">Golgi apparatus</keyword>
<keyword id="KW-0472">Membrane</keyword>
<keyword id="KW-1185">Reference proteome</keyword>
<keyword id="KW-0735">Signal-anchor</keyword>
<keyword id="KW-0808">Transferase</keyword>
<keyword id="KW-0812">Transmembrane</keyword>
<keyword id="KW-1133">Transmembrane helix</keyword>